<reference key="1">
    <citation type="journal article" date="2008" name="BMC Genomics">
        <title>Complete genome of Phenylobacterium zucineum - a novel facultative intracellular bacterium isolated from human erythroleukemia cell line K562.</title>
        <authorList>
            <person name="Luo Y."/>
            <person name="Xu X."/>
            <person name="Ding Z."/>
            <person name="Liu Z."/>
            <person name="Zhang B."/>
            <person name="Yan Z."/>
            <person name="Sun J."/>
            <person name="Hu S."/>
            <person name="Hu X."/>
        </authorList>
    </citation>
    <scope>NUCLEOTIDE SEQUENCE [LARGE SCALE GENOMIC DNA]</scope>
    <source>
        <strain>HLK1</strain>
    </source>
</reference>
<sequence>MAKKILGYIKLQVPAGAATPSPPIGPALGQRGVNIMGFCKEFNARTEKEQKGTPLPTVITVYQDKSFTFVTKTPPATYYIKQAVGLQSGSGKTGRETVGKITRAQLREIAEKKMKDLNANDVEAAARIIEGSARSMGLQIVEA</sequence>
<evidence type="ECO:0000255" key="1">
    <source>
        <dbReference type="HAMAP-Rule" id="MF_00736"/>
    </source>
</evidence>
<evidence type="ECO:0000305" key="2"/>
<gene>
    <name evidence="1" type="primary">rplK</name>
    <name type="ordered locus">PHZ_c1214</name>
</gene>
<name>RL11_PHEZH</name>
<accession>B4R8K1</accession>
<dbReference type="EMBL" id="CP000747">
    <property type="protein sequence ID" value="ACG77628.1"/>
    <property type="molecule type" value="Genomic_DNA"/>
</dbReference>
<dbReference type="RefSeq" id="WP_012521773.1">
    <property type="nucleotide sequence ID" value="NC_011144.1"/>
</dbReference>
<dbReference type="SMR" id="B4R8K1"/>
<dbReference type="STRING" id="450851.PHZ_c1214"/>
<dbReference type="KEGG" id="pzu:PHZ_c1214"/>
<dbReference type="eggNOG" id="COG0080">
    <property type="taxonomic scope" value="Bacteria"/>
</dbReference>
<dbReference type="HOGENOM" id="CLU_074237_2_1_5"/>
<dbReference type="OrthoDB" id="9802408at2"/>
<dbReference type="Proteomes" id="UP000001868">
    <property type="component" value="Chromosome"/>
</dbReference>
<dbReference type="GO" id="GO:0022625">
    <property type="term" value="C:cytosolic large ribosomal subunit"/>
    <property type="evidence" value="ECO:0007669"/>
    <property type="project" value="TreeGrafter"/>
</dbReference>
<dbReference type="GO" id="GO:0070180">
    <property type="term" value="F:large ribosomal subunit rRNA binding"/>
    <property type="evidence" value="ECO:0007669"/>
    <property type="project" value="UniProtKB-UniRule"/>
</dbReference>
<dbReference type="GO" id="GO:0003735">
    <property type="term" value="F:structural constituent of ribosome"/>
    <property type="evidence" value="ECO:0007669"/>
    <property type="project" value="InterPro"/>
</dbReference>
<dbReference type="GO" id="GO:0006412">
    <property type="term" value="P:translation"/>
    <property type="evidence" value="ECO:0007669"/>
    <property type="project" value="UniProtKB-UniRule"/>
</dbReference>
<dbReference type="CDD" id="cd00349">
    <property type="entry name" value="Ribosomal_L11"/>
    <property type="match status" value="1"/>
</dbReference>
<dbReference type="FunFam" id="1.10.10.250:FF:000001">
    <property type="entry name" value="50S ribosomal protein L11"/>
    <property type="match status" value="1"/>
</dbReference>
<dbReference type="FunFam" id="3.30.1550.10:FF:000001">
    <property type="entry name" value="50S ribosomal protein L11"/>
    <property type="match status" value="1"/>
</dbReference>
<dbReference type="Gene3D" id="1.10.10.250">
    <property type="entry name" value="Ribosomal protein L11, C-terminal domain"/>
    <property type="match status" value="1"/>
</dbReference>
<dbReference type="Gene3D" id="3.30.1550.10">
    <property type="entry name" value="Ribosomal protein L11/L12, N-terminal domain"/>
    <property type="match status" value="1"/>
</dbReference>
<dbReference type="HAMAP" id="MF_00736">
    <property type="entry name" value="Ribosomal_uL11"/>
    <property type="match status" value="1"/>
</dbReference>
<dbReference type="InterPro" id="IPR000911">
    <property type="entry name" value="Ribosomal_uL11"/>
</dbReference>
<dbReference type="InterPro" id="IPR006519">
    <property type="entry name" value="Ribosomal_uL11_bac-typ"/>
</dbReference>
<dbReference type="InterPro" id="IPR020783">
    <property type="entry name" value="Ribosomal_uL11_C"/>
</dbReference>
<dbReference type="InterPro" id="IPR036769">
    <property type="entry name" value="Ribosomal_uL11_C_sf"/>
</dbReference>
<dbReference type="InterPro" id="IPR020785">
    <property type="entry name" value="Ribosomal_uL11_CS"/>
</dbReference>
<dbReference type="InterPro" id="IPR020784">
    <property type="entry name" value="Ribosomal_uL11_N"/>
</dbReference>
<dbReference type="InterPro" id="IPR036796">
    <property type="entry name" value="Ribosomal_uL11_N_sf"/>
</dbReference>
<dbReference type="NCBIfam" id="TIGR01632">
    <property type="entry name" value="L11_bact"/>
    <property type="match status" value="1"/>
</dbReference>
<dbReference type="PANTHER" id="PTHR11661">
    <property type="entry name" value="60S RIBOSOMAL PROTEIN L12"/>
    <property type="match status" value="1"/>
</dbReference>
<dbReference type="PANTHER" id="PTHR11661:SF1">
    <property type="entry name" value="LARGE RIBOSOMAL SUBUNIT PROTEIN UL11M"/>
    <property type="match status" value="1"/>
</dbReference>
<dbReference type="Pfam" id="PF00298">
    <property type="entry name" value="Ribosomal_L11"/>
    <property type="match status" value="1"/>
</dbReference>
<dbReference type="Pfam" id="PF03946">
    <property type="entry name" value="Ribosomal_L11_N"/>
    <property type="match status" value="1"/>
</dbReference>
<dbReference type="SMART" id="SM00649">
    <property type="entry name" value="RL11"/>
    <property type="match status" value="1"/>
</dbReference>
<dbReference type="SUPFAM" id="SSF54747">
    <property type="entry name" value="Ribosomal L11/L12e N-terminal domain"/>
    <property type="match status" value="1"/>
</dbReference>
<dbReference type="SUPFAM" id="SSF46906">
    <property type="entry name" value="Ribosomal protein L11, C-terminal domain"/>
    <property type="match status" value="1"/>
</dbReference>
<dbReference type="PROSITE" id="PS00359">
    <property type="entry name" value="RIBOSOMAL_L11"/>
    <property type="match status" value="1"/>
</dbReference>
<organism>
    <name type="scientific">Phenylobacterium zucineum (strain HLK1)</name>
    <dbReference type="NCBI Taxonomy" id="450851"/>
    <lineage>
        <taxon>Bacteria</taxon>
        <taxon>Pseudomonadati</taxon>
        <taxon>Pseudomonadota</taxon>
        <taxon>Alphaproteobacteria</taxon>
        <taxon>Caulobacterales</taxon>
        <taxon>Caulobacteraceae</taxon>
        <taxon>Phenylobacterium</taxon>
    </lineage>
</organism>
<feature type="chain" id="PRO_1000195686" description="Large ribosomal subunit protein uL11">
    <location>
        <begin position="1"/>
        <end position="143"/>
    </location>
</feature>
<protein>
    <recommendedName>
        <fullName evidence="1">Large ribosomal subunit protein uL11</fullName>
    </recommendedName>
    <alternativeName>
        <fullName evidence="2">50S ribosomal protein L11</fullName>
    </alternativeName>
</protein>
<comment type="function">
    <text evidence="1">Forms part of the ribosomal stalk which helps the ribosome interact with GTP-bound translation factors.</text>
</comment>
<comment type="subunit">
    <text evidence="1">Part of the ribosomal stalk of the 50S ribosomal subunit. Interacts with L10 and the large rRNA to form the base of the stalk. L10 forms an elongated spine to which L12 dimers bind in a sequential fashion forming a multimeric L10(L12)X complex.</text>
</comment>
<comment type="PTM">
    <text evidence="1">One or more lysine residues are methylated.</text>
</comment>
<comment type="similarity">
    <text evidence="1">Belongs to the universal ribosomal protein uL11 family.</text>
</comment>
<keyword id="KW-0488">Methylation</keyword>
<keyword id="KW-1185">Reference proteome</keyword>
<keyword id="KW-0687">Ribonucleoprotein</keyword>
<keyword id="KW-0689">Ribosomal protein</keyword>
<keyword id="KW-0694">RNA-binding</keyword>
<keyword id="KW-0699">rRNA-binding</keyword>
<proteinExistence type="inferred from homology"/>